<accession>Q6G2X1</accession>
<dbReference type="EMBL" id="BX897699">
    <property type="protein sequence ID" value="CAF27836.1"/>
    <property type="molecule type" value="Genomic_DNA"/>
</dbReference>
<dbReference type="RefSeq" id="WP_011180908.1">
    <property type="nucleotide sequence ID" value="NZ_LRIJ02000001.1"/>
</dbReference>
<dbReference type="SMR" id="Q6G2X1"/>
<dbReference type="PaxDb" id="283166-BH10450"/>
<dbReference type="EnsemblBacteria" id="CAF27836">
    <property type="protein sequence ID" value="CAF27836"/>
    <property type="gene ID" value="BH10450"/>
</dbReference>
<dbReference type="GeneID" id="92985269"/>
<dbReference type="KEGG" id="bhe:BH10450"/>
<dbReference type="eggNOG" id="COG0092">
    <property type="taxonomic scope" value="Bacteria"/>
</dbReference>
<dbReference type="OrthoDB" id="9806396at2"/>
<dbReference type="Proteomes" id="UP000000421">
    <property type="component" value="Chromosome"/>
</dbReference>
<dbReference type="GO" id="GO:0022627">
    <property type="term" value="C:cytosolic small ribosomal subunit"/>
    <property type="evidence" value="ECO:0007669"/>
    <property type="project" value="TreeGrafter"/>
</dbReference>
<dbReference type="GO" id="GO:0003729">
    <property type="term" value="F:mRNA binding"/>
    <property type="evidence" value="ECO:0007669"/>
    <property type="project" value="UniProtKB-UniRule"/>
</dbReference>
<dbReference type="GO" id="GO:0019843">
    <property type="term" value="F:rRNA binding"/>
    <property type="evidence" value="ECO:0007669"/>
    <property type="project" value="UniProtKB-UniRule"/>
</dbReference>
<dbReference type="GO" id="GO:0003735">
    <property type="term" value="F:structural constituent of ribosome"/>
    <property type="evidence" value="ECO:0007669"/>
    <property type="project" value="InterPro"/>
</dbReference>
<dbReference type="GO" id="GO:0006412">
    <property type="term" value="P:translation"/>
    <property type="evidence" value="ECO:0007669"/>
    <property type="project" value="UniProtKB-UniRule"/>
</dbReference>
<dbReference type="CDD" id="cd02412">
    <property type="entry name" value="KH-II_30S_S3"/>
    <property type="match status" value="1"/>
</dbReference>
<dbReference type="FunFam" id="3.30.1140.32:FF:000002">
    <property type="entry name" value="30S ribosomal protein S3"/>
    <property type="match status" value="1"/>
</dbReference>
<dbReference type="FunFam" id="3.30.300.20:FF:000001">
    <property type="entry name" value="30S ribosomal protein S3"/>
    <property type="match status" value="1"/>
</dbReference>
<dbReference type="Gene3D" id="3.30.300.20">
    <property type="match status" value="1"/>
</dbReference>
<dbReference type="Gene3D" id="3.30.1140.32">
    <property type="entry name" value="Ribosomal protein S3, C-terminal domain"/>
    <property type="match status" value="1"/>
</dbReference>
<dbReference type="HAMAP" id="MF_01309_B">
    <property type="entry name" value="Ribosomal_uS3_B"/>
    <property type="match status" value="1"/>
</dbReference>
<dbReference type="InterPro" id="IPR004087">
    <property type="entry name" value="KH_dom"/>
</dbReference>
<dbReference type="InterPro" id="IPR015946">
    <property type="entry name" value="KH_dom-like_a/b"/>
</dbReference>
<dbReference type="InterPro" id="IPR004044">
    <property type="entry name" value="KH_dom_type_2"/>
</dbReference>
<dbReference type="InterPro" id="IPR009019">
    <property type="entry name" value="KH_sf_prok-type"/>
</dbReference>
<dbReference type="InterPro" id="IPR036419">
    <property type="entry name" value="Ribosomal_S3_C_sf"/>
</dbReference>
<dbReference type="InterPro" id="IPR005704">
    <property type="entry name" value="Ribosomal_uS3_bac-typ"/>
</dbReference>
<dbReference type="InterPro" id="IPR001351">
    <property type="entry name" value="Ribosomal_uS3_C"/>
</dbReference>
<dbReference type="InterPro" id="IPR018280">
    <property type="entry name" value="Ribosomal_uS3_CS"/>
</dbReference>
<dbReference type="NCBIfam" id="TIGR01009">
    <property type="entry name" value="rpsC_bact"/>
    <property type="match status" value="1"/>
</dbReference>
<dbReference type="PANTHER" id="PTHR11760">
    <property type="entry name" value="30S/40S RIBOSOMAL PROTEIN S3"/>
    <property type="match status" value="1"/>
</dbReference>
<dbReference type="PANTHER" id="PTHR11760:SF19">
    <property type="entry name" value="SMALL RIBOSOMAL SUBUNIT PROTEIN US3C"/>
    <property type="match status" value="1"/>
</dbReference>
<dbReference type="Pfam" id="PF07650">
    <property type="entry name" value="KH_2"/>
    <property type="match status" value="1"/>
</dbReference>
<dbReference type="Pfam" id="PF00189">
    <property type="entry name" value="Ribosomal_S3_C"/>
    <property type="match status" value="1"/>
</dbReference>
<dbReference type="SMART" id="SM00322">
    <property type="entry name" value="KH"/>
    <property type="match status" value="1"/>
</dbReference>
<dbReference type="SUPFAM" id="SSF54814">
    <property type="entry name" value="Prokaryotic type KH domain (KH-domain type II)"/>
    <property type="match status" value="1"/>
</dbReference>
<dbReference type="SUPFAM" id="SSF54821">
    <property type="entry name" value="Ribosomal protein S3 C-terminal domain"/>
    <property type="match status" value="1"/>
</dbReference>
<dbReference type="PROSITE" id="PS50823">
    <property type="entry name" value="KH_TYPE_2"/>
    <property type="match status" value="1"/>
</dbReference>
<dbReference type="PROSITE" id="PS00548">
    <property type="entry name" value="RIBOSOMAL_S3"/>
    <property type="match status" value="1"/>
</dbReference>
<reference key="1">
    <citation type="journal article" date="2004" name="Proc. Natl. Acad. Sci. U.S.A.">
        <title>The louse-borne human pathogen Bartonella quintana is a genomic derivative of the zoonotic agent Bartonella henselae.</title>
        <authorList>
            <person name="Alsmark U.C.M."/>
            <person name="Frank A.C."/>
            <person name="Karlberg E.O."/>
            <person name="Legault B.-A."/>
            <person name="Ardell D.H."/>
            <person name="Canbaeck B."/>
            <person name="Eriksson A.-S."/>
            <person name="Naeslund A.K."/>
            <person name="Handley S.A."/>
            <person name="Huvet M."/>
            <person name="La Scola B."/>
            <person name="Holmberg M."/>
            <person name="Andersson S.G.E."/>
        </authorList>
    </citation>
    <scope>NUCLEOTIDE SEQUENCE [LARGE SCALE GENOMIC DNA]</scope>
    <source>
        <strain>ATCC 49882 / DSM 28221 / CCUG 30454 / Houston 1</strain>
    </source>
</reference>
<name>RS3_BARHE</name>
<sequence length="236" mass="26686">MGQKINPIGLRLGVNRTWDSRWYADSGEYGRLLHEDLKIRLYVLEELKQAAVSKIVIERPHKKCRVTIYSARPGLIIGKKGADIEKLRRKLSEMTNAETSLNIVEIHKPEIDATIIAQSIAQQLERRVAFRRAMKRAVQSALRLGAEGIRINCSGRLGGAEIARMEWYREGRVPLHTLRSDVDYGTAEAKTAYGICGVKVWVFKGEILEYDPMASERRAAEVDHSGSSSNRRRENA</sequence>
<feature type="chain" id="PRO_0000130075" description="Small ribosomal subunit protein uS3">
    <location>
        <begin position="1"/>
        <end position="236"/>
    </location>
</feature>
<feature type="domain" description="KH type-2" evidence="1">
    <location>
        <begin position="39"/>
        <end position="107"/>
    </location>
</feature>
<feature type="region of interest" description="Disordered" evidence="2">
    <location>
        <begin position="216"/>
        <end position="236"/>
    </location>
</feature>
<protein>
    <recommendedName>
        <fullName evidence="1">Small ribosomal subunit protein uS3</fullName>
    </recommendedName>
    <alternativeName>
        <fullName evidence="3">30S ribosomal protein S3</fullName>
    </alternativeName>
</protein>
<organism>
    <name type="scientific">Bartonella henselae (strain ATCC 49882 / DSM 28221 / CCUG 30454 / Houston 1)</name>
    <name type="common">Rochalimaea henselae</name>
    <dbReference type="NCBI Taxonomy" id="283166"/>
    <lineage>
        <taxon>Bacteria</taxon>
        <taxon>Pseudomonadati</taxon>
        <taxon>Pseudomonadota</taxon>
        <taxon>Alphaproteobacteria</taxon>
        <taxon>Hyphomicrobiales</taxon>
        <taxon>Bartonellaceae</taxon>
        <taxon>Bartonella</taxon>
    </lineage>
</organism>
<keyword id="KW-0687">Ribonucleoprotein</keyword>
<keyword id="KW-0689">Ribosomal protein</keyword>
<keyword id="KW-0694">RNA-binding</keyword>
<keyword id="KW-0699">rRNA-binding</keyword>
<gene>
    <name evidence="1" type="primary">rpsC</name>
    <name type="ordered locus">BH10450</name>
</gene>
<evidence type="ECO:0000255" key="1">
    <source>
        <dbReference type="HAMAP-Rule" id="MF_01309"/>
    </source>
</evidence>
<evidence type="ECO:0000256" key="2">
    <source>
        <dbReference type="SAM" id="MobiDB-lite"/>
    </source>
</evidence>
<evidence type="ECO:0000305" key="3"/>
<comment type="function">
    <text evidence="1">Binds the lower part of the 30S subunit head. Binds mRNA in the 70S ribosome, positioning it for translation.</text>
</comment>
<comment type="subunit">
    <text evidence="1">Part of the 30S ribosomal subunit. Forms a tight complex with proteins S10 and S14.</text>
</comment>
<comment type="similarity">
    <text evidence="1">Belongs to the universal ribosomal protein uS3 family.</text>
</comment>
<proteinExistence type="inferred from homology"/>